<gene>
    <name evidence="2" type="primary">bioH</name>
    <name type="ordered locus">PC1_3924</name>
</gene>
<protein>
    <recommendedName>
        <fullName evidence="2">Pimeloyl-[acyl-carrier protein] methyl ester esterase</fullName>
        <ecNumber evidence="2">3.1.1.85</ecNumber>
    </recommendedName>
    <alternativeName>
        <fullName evidence="2">Biotin synthesis protein BioH</fullName>
    </alternativeName>
    <alternativeName>
        <fullName evidence="2">Carboxylesterase BioH</fullName>
    </alternativeName>
</protein>
<keyword id="KW-0093">Biotin biosynthesis</keyword>
<keyword id="KW-0963">Cytoplasm</keyword>
<keyword id="KW-0378">Hydrolase</keyword>
<keyword id="KW-0719">Serine esterase</keyword>
<dbReference type="EC" id="3.1.1.85" evidence="2"/>
<dbReference type="EMBL" id="CP001657">
    <property type="protein sequence ID" value="ACT14939.1"/>
    <property type="molecule type" value="Genomic_DNA"/>
</dbReference>
<dbReference type="RefSeq" id="WP_015842021.1">
    <property type="nucleotide sequence ID" value="NC_012917.1"/>
</dbReference>
<dbReference type="SMR" id="C6DGH6"/>
<dbReference type="STRING" id="561230.PC1_3924"/>
<dbReference type="ESTHER" id="erwct-q6czl9">
    <property type="family name" value="BioH"/>
</dbReference>
<dbReference type="KEGG" id="pct:PC1_3924"/>
<dbReference type="eggNOG" id="COG2267">
    <property type="taxonomic scope" value="Bacteria"/>
</dbReference>
<dbReference type="HOGENOM" id="CLU_020336_12_2_6"/>
<dbReference type="OrthoDB" id="9780744at2"/>
<dbReference type="UniPathway" id="UPA00078"/>
<dbReference type="Proteomes" id="UP000002736">
    <property type="component" value="Chromosome"/>
</dbReference>
<dbReference type="GO" id="GO:0005737">
    <property type="term" value="C:cytoplasm"/>
    <property type="evidence" value="ECO:0007669"/>
    <property type="project" value="UniProtKB-SubCell"/>
</dbReference>
<dbReference type="GO" id="GO:0090499">
    <property type="term" value="F:pimelyl-[acyl-carrier protein] methyl ester esterase activity"/>
    <property type="evidence" value="ECO:0007669"/>
    <property type="project" value="UniProtKB-EC"/>
</dbReference>
<dbReference type="GO" id="GO:0009102">
    <property type="term" value="P:biotin biosynthetic process"/>
    <property type="evidence" value="ECO:0007669"/>
    <property type="project" value="UniProtKB-UniRule"/>
</dbReference>
<dbReference type="FunFam" id="3.40.50.1820:FF:000045">
    <property type="entry name" value="Pimeloyl-[acyl-carrier protein] methyl ester esterase"/>
    <property type="match status" value="1"/>
</dbReference>
<dbReference type="Gene3D" id="3.40.50.1820">
    <property type="entry name" value="alpha/beta hydrolase"/>
    <property type="match status" value="1"/>
</dbReference>
<dbReference type="HAMAP" id="MF_01260">
    <property type="entry name" value="Carboxylester"/>
    <property type="match status" value="1"/>
</dbReference>
<dbReference type="InterPro" id="IPR000073">
    <property type="entry name" value="AB_hydrolase_1"/>
</dbReference>
<dbReference type="InterPro" id="IPR029058">
    <property type="entry name" value="AB_hydrolase_fold"/>
</dbReference>
<dbReference type="InterPro" id="IPR010076">
    <property type="entry name" value="BioH"/>
</dbReference>
<dbReference type="InterPro" id="IPR050228">
    <property type="entry name" value="Carboxylesterase_BioH"/>
</dbReference>
<dbReference type="NCBIfam" id="TIGR01738">
    <property type="entry name" value="bioH"/>
    <property type="match status" value="1"/>
</dbReference>
<dbReference type="PANTHER" id="PTHR43194">
    <property type="entry name" value="HYDROLASE ALPHA/BETA FOLD FAMILY"/>
    <property type="match status" value="1"/>
</dbReference>
<dbReference type="PANTHER" id="PTHR43194:SF5">
    <property type="entry name" value="PIMELOYL-[ACYL-CARRIER PROTEIN] METHYL ESTER ESTERASE"/>
    <property type="match status" value="1"/>
</dbReference>
<dbReference type="Pfam" id="PF00561">
    <property type="entry name" value="Abhydrolase_1"/>
    <property type="match status" value="1"/>
</dbReference>
<dbReference type="SUPFAM" id="SSF53474">
    <property type="entry name" value="alpha/beta-Hydrolases"/>
    <property type="match status" value="1"/>
</dbReference>
<sequence>MATLYWQTEGAGNTDLVLLHGWGLNAQVWQSIIARLAPHFRLHVVDLPGYGRSQGFGAMSLSDMANIVLAQAPERAIWLGWSLGGLVASQIALSAPERVDKLITVASSPCFSAQDGWPGIKPDVLQGFQQQLSEDFQRTVERFLALQTLGTESARQDARLLKSVVLEQPMPSVEVLNGGLDILREADLRQPLADLAVPFLRLYGALDGLVPRKVAGLLDEQWLNSTSVVIPKAAHAPFISHPDAFTEQVIAFAQA</sequence>
<evidence type="ECO:0000255" key="1"/>
<evidence type="ECO:0000255" key="2">
    <source>
        <dbReference type="HAMAP-Rule" id="MF_01260"/>
    </source>
</evidence>
<accession>C6DGH6</accession>
<name>BIOH_PECCP</name>
<proteinExistence type="inferred from homology"/>
<reference key="1">
    <citation type="submission" date="2009-07" db="EMBL/GenBank/DDBJ databases">
        <title>Complete sequence of Pectobacterium carotovorum subsp. carotovorum PC1.</title>
        <authorList>
            <consortium name="US DOE Joint Genome Institute"/>
            <person name="Lucas S."/>
            <person name="Copeland A."/>
            <person name="Lapidus A."/>
            <person name="Glavina del Rio T."/>
            <person name="Tice H."/>
            <person name="Bruce D."/>
            <person name="Goodwin L."/>
            <person name="Pitluck S."/>
            <person name="Munk A.C."/>
            <person name="Brettin T."/>
            <person name="Detter J.C."/>
            <person name="Han C."/>
            <person name="Tapia R."/>
            <person name="Larimer F."/>
            <person name="Land M."/>
            <person name="Hauser L."/>
            <person name="Kyrpides N."/>
            <person name="Mikhailova N."/>
            <person name="Balakrishnan V."/>
            <person name="Glasner J."/>
            <person name="Perna N.T."/>
        </authorList>
    </citation>
    <scope>NUCLEOTIDE SEQUENCE [LARGE SCALE GENOMIC DNA]</scope>
    <source>
        <strain>PC1</strain>
    </source>
</reference>
<organism>
    <name type="scientific">Pectobacterium carotovorum subsp. carotovorum (strain PC1)</name>
    <dbReference type="NCBI Taxonomy" id="561230"/>
    <lineage>
        <taxon>Bacteria</taxon>
        <taxon>Pseudomonadati</taxon>
        <taxon>Pseudomonadota</taxon>
        <taxon>Gammaproteobacteria</taxon>
        <taxon>Enterobacterales</taxon>
        <taxon>Pectobacteriaceae</taxon>
        <taxon>Pectobacterium</taxon>
    </lineage>
</organism>
<comment type="function">
    <text evidence="2">The physiological role of BioH is to remove the methyl group introduced by BioC when the pimeloyl moiety is complete. It allows to synthesize pimeloyl-ACP via the fatty acid synthetic pathway through the hydrolysis of the ester bonds of pimeloyl-ACP esters.</text>
</comment>
<comment type="catalytic activity">
    <reaction evidence="2">
        <text>6-carboxyhexanoyl-[ACP] methyl ester + H2O = 6-carboxyhexanoyl-[ACP] + methanol + H(+)</text>
        <dbReference type="Rhea" id="RHEA:42700"/>
        <dbReference type="Rhea" id="RHEA-COMP:9955"/>
        <dbReference type="Rhea" id="RHEA-COMP:10186"/>
        <dbReference type="ChEBI" id="CHEBI:15377"/>
        <dbReference type="ChEBI" id="CHEBI:15378"/>
        <dbReference type="ChEBI" id="CHEBI:17790"/>
        <dbReference type="ChEBI" id="CHEBI:78846"/>
        <dbReference type="ChEBI" id="CHEBI:82735"/>
        <dbReference type="EC" id="3.1.1.85"/>
    </reaction>
</comment>
<comment type="pathway">
    <text evidence="2">Cofactor biosynthesis; biotin biosynthesis.</text>
</comment>
<comment type="subunit">
    <text evidence="2">Monomer.</text>
</comment>
<comment type="subcellular location">
    <subcellularLocation>
        <location evidence="2">Cytoplasm</location>
    </subcellularLocation>
</comment>
<comment type="similarity">
    <text evidence="2">Belongs to the AB hydrolase superfamily. Carboxylesterase BioH family.</text>
</comment>
<feature type="chain" id="PRO_1000214127" description="Pimeloyl-[acyl-carrier protein] methyl ester esterase">
    <location>
        <begin position="1"/>
        <end position="255"/>
    </location>
</feature>
<feature type="domain" description="AB hydrolase-1" evidence="1">
    <location>
        <begin position="16"/>
        <end position="242"/>
    </location>
</feature>
<feature type="active site" description="Nucleophile" evidence="2">
    <location>
        <position position="82"/>
    </location>
</feature>
<feature type="active site" evidence="2">
    <location>
        <position position="207"/>
    </location>
</feature>
<feature type="active site" evidence="2">
    <location>
        <position position="235"/>
    </location>
</feature>
<feature type="binding site" evidence="2">
    <location>
        <position position="22"/>
    </location>
    <ligand>
        <name>substrate</name>
    </ligand>
</feature>
<feature type="binding site" evidence="2">
    <location>
        <begin position="82"/>
        <end position="83"/>
    </location>
    <ligand>
        <name>substrate</name>
    </ligand>
</feature>
<feature type="binding site" evidence="2">
    <location>
        <begin position="143"/>
        <end position="147"/>
    </location>
    <ligand>
        <name>substrate</name>
    </ligand>
</feature>
<feature type="binding site" evidence="2">
    <location>
        <position position="235"/>
    </location>
    <ligand>
        <name>substrate</name>
    </ligand>
</feature>